<proteinExistence type="evidence at protein level"/>
<protein>
    <recommendedName>
        <fullName evidence="1">3-dehydroquinate synthase</fullName>
        <shortName evidence="1">DHQS</shortName>
        <ecNumber evidence="1">4.2.3.4</ecNumber>
    </recommendedName>
</protein>
<reference key="1">
    <citation type="journal article" date="2000" name="Nature">
        <title>DNA sequence of both chromosomes of the cholera pathogen Vibrio cholerae.</title>
        <authorList>
            <person name="Heidelberg J.F."/>
            <person name="Eisen J.A."/>
            <person name="Nelson W.C."/>
            <person name="Clayton R.A."/>
            <person name="Gwinn M.L."/>
            <person name="Dodson R.J."/>
            <person name="Haft D.H."/>
            <person name="Hickey E.K."/>
            <person name="Peterson J.D."/>
            <person name="Umayam L.A."/>
            <person name="Gill S.R."/>
            <person name="Nelson K.E."/>
            <person name="Read T.D."/>
            <person name="Tettelin H."/>
            <person name="Richardson D.L."/>
            <person name="Ermolaeva M.D."/>
            <person name="Vamathevan J.J."/>
            <person name="Bass S."/>
            <person name="Qin H."/>
            <person name="Dragoi I."/>
            <person name="Sellers P."/>
            <person name="McDonald L.A."/>
            <person name="Utterback T.R."/>
            <person name="Fleischmann R.D."/>
            <person name="Nierman W.C."/>
            <person name="White O."/>
            <person name="Salzberg S.L."/>
            <person name="Smith H.O."/>
            <person name="Colwell R.R."/>
            <person name="Mekalanos J.J."/>
            <person name="Venter J.C."/>
            <person name="Fraser C.M."/>
        </authorList>
    </citation>
    <scope>NUCLEOTIDE SEQUENCE [LARGE SCALE GENOMIC DNA]</scope>
    <source>
        <strain>ATCC 39315 / El Tor Inaba N16961</strain>
    </source>
</reference>
<reference evidence="4" key="2">
    <citation type="submission" date="2010-08" db="PDB data bank">
        <title>2.5 angstrom resolution crystal structure of 3-dehydroquinate synthase (aroB) from Vibrio cholerae.</title>
        <authorList>
            <person name="Minasov G."/>
            <person name="Light S.H."/>
            <person name="Shuvalova L."/>
            <person name="Papazisi L."/>
            <person name="Anderson W.F."/>
        </authorList>
    </citation>
    <scope>X-RAY CRYSTALLOGRAPHY (2.50 ANGSTROMS) IN COMPLEX WITH NAD</scope>
</reference>
<feature type="chain" id="PRO_0000140804" description="3-dehydroquinate synthase">
    <location>
        <begin position="1"/>
        <end position="361"/>
    </location>
</feature>
<feature type="binding site" evidence="2 4">
    <location>
        <position position="41"/>
    </location>
    <ligand>
        <name>NAD(+)</name>
        <dbReference type="ChEBI" id="CHEBI:57540"/>
    </ligand>
</feature>
<feature type="binding site" evidence="1 2 4">
    <location>
        <begin position="70"/>
        <end position="75"/>
    </location>
    <ligand>
        <name>NAD(+)</name>
        <dbReference type="ChEBI" id="CHEBI:57540"/>
    </ligand>
</feature>
<feature type="binding site" evidence="1 2 4">
    <location>
        <begin position="104"/>
        <end position="108"/>
    </location>
    <ligand>
        <name>NAD(+)</name>
        <dbReference type="ChEBI" id="CHEBI:57540"/>
    </ligand>
</feature>
<feature type="binding site" evidence="1 2 4">
    <location>
        <begin position="128"/>
        <end position="129"/>
    </location>
    <ligand>
        <name>NAD(+)</name>
        <dbReference type="ChEBI" id="CHEBI:57540"/>
    </ligand>
</feature>
<feature type="binding site" evidence="1 2 4">
    <location>
        <position position="141"/>
    </location>
    <ligand>
        <name>NAD(+)</name>
        <dbReference type="ChEBI" id="CHEBI:57540"/>
    </ligand>
</feature>
<feature type="binding site" evidence="2 4">
    <location>
        <begin position="150"/>
        <end position="151"/>
    </location>
    <ligand>
        <name>NAD(+)</name>
        <dbReference type="ChEBI" id="CHEBI:57540"/>
    </ligand>
</feature>
<feature type="binding site" evidence="1">
    <location>
        <position position="150"/>
    </location>
    <ligand>
        <name>NAD(+)</name>
        <dbReference type="ChEBI" id="CHEBI:57540"/>
    </ligand>
</feature>
<feature type="binding site" evidence="1 2 4">
    <location>
        <begin position="168"/>
        <end position="171"/>
    </location>
    <ligand>
        <name>NAD(+)</name>
        <dbReference type="ChEBI" id="CHEBI:57540"/>
    </ligand>
</feature>
<feature type="binding site" evidence="1">
    <location>
        <position position="183"/>
    </location>
    <ligand>
        <name>Zn(2+)</name>
        <dbReference type="ChEBI" id="CHEBI:29105"/>
    </ligand>
</feature>
<feature type="binding site" evidence="1">
    <location>
        <position position="246"/>
    </location>
    <ligand>
        <name>Zn(2+)</name>
        <dbReference type="ChEBI" id="CHEBI:29105"/>
    </ligand>
</feature>
<feature type="binding site" evidence="1">
    <location>
        <position position="263"/>
    </location>
    <ligand>
        <name>Zn(2+)</name>
        <dbReference type="ChEBI" id="CHEBI:29105"/>
    </ligand>
</feature>
<feature type="strand" evidence="5">
    <location>
        <begin position="1"/>
        <end position="6"/>
    </location>
</feature>
<feature type="helix" evidence="5">
    <location>
        <begin position="9"/>
        <end position="11"/>
    </location>
</feature>
<feature type="strand" evidence="5">
    <location>
        <begin position="13"/>
        <end position="18"/>
    </location>
</feature>
<feature type="helix" evidence="5">
    <location>
        <begin position="21"/>
        <end position="23"/>
    </location>
</feature>
<feature type="helix" evidence="5">
    <location>
        <begin position="25"/>
        <end position="28"/>
    </location>
</feature>
<feature type="strand" evidence="5">
    <location>
        <begin position="35"/>
        <end position="41"/>
    </location>
</feature>
<feature type="turn" evidence="5">
    <location>
        <begin position="42"/>
        <end position="44"/>
    </location>
</feature>
<feature type="helix" evidence="5">
    <location>
        <begin position="45"/>
        <end position="59"/>
    </location>
</feature>
<feature type="strand" evidence="5">
    <location>
        <begin position="62"/>
        <end position="68"/>
    </location>
</feature>
<feature type="helix" evidence="5">
    <location>
        <begin position="72"/>
        <end position="74"/>
    </location>
</feature>
<feature type="helix" evidence="5">
    <location>
        <begin position="77"/>
        <end position="89"/>
    </location>
</feature>
<feature type="strand" evidence="5">
    <location>
        <begin position="97"/>
        <end position="103"/>
    </location>
</feature>
<feature type="helix" evidence="5">
    <location>
        <begin position="104"/>
        <end position="116"/>
    </location>
</feature>
<feature type="strand" evidence="5">
    <location>
        <begin position="122"/>
        <end position="127"/>
    </location>
</feature>
<feature type="helix" evidence="5">
    <location>
        <begin position="130"/>
        <end position="135"/>
    </location>
</feature>
<feature type="strand" evidence="5">
    <location>
        <begin position="137"/>
        <end position="139"/>
    </location>
</feature>
<feature type="strand" evidence="5">
    <location>
        <begin position="141"/>
        <end position="146"/>
    </location>
</feature>
<feature type="strand" evidence="5">
    <location>
        <begin position="149"/>
        <end position="156"/>
    </location>
</feature>
<feature type="strand" evidence="5">
    <location>
        <begin position="160"/>
        <end position="165"/>
    </location>
</feature>
<feature type="helix" evidence="5">
    <location>
        <begin position="166"/>
        <end position="171"/>
    </location>
</feature>
<feature type="helix" evidence="5">
    <location>
        <begin position="174"/>
        <end position="190"/>
    </location>
</feature>
<feature type="helix" evidence="5">
    <location>
        <begin position="193"/>
        <end position="207"/>
    </location>
</feature>
<feature type="helix" evidence="5">
    <location>
        <begin position="211"/>
        <end position="233"/>
    </location>
</feature>
<feature type="helix" evidence="5">
    <location>
        <begin position="238"/>
        <end position="243"/>
    </location>
</feature>
<feature type="helix" evidence="5">
    <location>
        <begin position="246"/>
        <end position="256"/>
    </location>
</feature>
<feature type="turn" evidence="5">
    <location>
        <begin position="258"/>
        <end position="260"/>
    </location>
</feature>
<feature type="helix" evidence="5">
    <location>
        <begin position="263"/>
        <end position="280"/>
    </location>
</feature>
<feature type="helix" evidence="5">
    <location>
        <begin position="286"/>
        <end position="298"/>
    </location>
</feature>
<feature type="helix" evidence="5">
    <location>
        <begin position="311"/>
        <end position="318"/>
    </location>
</feature>
<feature type="helix" evidence="5">
    <location>
        <begin position="320"/>
        <end position="322"/>
    </location>
</feature>
<feature type="strand" evidence="5">
    <location>
        <begin position="330"/>
        <end position="336"/>
    </location>
</feature>
<feature type="strand" evidence="5">
    <location>
        <begin position="339"/>
        <end position="344"/>
    </location>
</feature>
<feature type="helix" evidence="5">
    <location>
        <begin position="348"/>
        <end position="357"/>
    </location>
</feature>
<sequence>MERITVNLGERSYPISIGAGLFANPALLSLSAKQKVVIVTNHTVAPLYAPAIISLLDHIGCQHALLELPDGEQYKTLETFNTVMSFLLEHNYSRDVVVIALGGGVIGDLVGFAAACYQRGVDFIQIPTTLLSQVDSSVGGKTAVNHPLGKNMIGAFYQPKAVVIDTDCLTTLPAREFAAGMAEVIKYGIIYDSAFFDWLEAQMEALYALDEQALTYAIARCCQIKAEVVAQDEKESGIRALLNLGHTFGHAIEAHMGYGNWLHGEAVSAGTVMAAKTAQLQGLIDASQFERILAILKKAHLPVRTPENMTFADFMQHMMRDKKVLAGELRLVLPTSIGTSAVVKGVPEAVIAQAIEYCRTV</sequence>
<accession>Q9KNV2</accession>
<evidence type="ECO:0000255" key="1">
    <source>
        <dbReference type="HAMAP-Rule" id="MF_00110"/>
    </source>
</evidence>
<evidence type="ECO:0000269" key="2">
    <source ref="2"/>
</evidence>
<evidence type="ECO:0000305" key="3"/>
<evidence type="ECO:0007744" key="4">
    <source>
        <dbReference type="PDB" id="3OKF"/>
    </source>
</evidence>
<evidence type="ECO:0007829" key="5">
    <source>
        <dbReference type="PDB" id="3OKF"/>
    </source>
</evidence>
<keyword id="KW-0002">3D-structure</keyword>
<keyword id="KW-0028">Amino-acid biosynthesis</keyword>
<keyword id="KW-0057">Aromatic amino acid biosynthesis</keyword>
<keyword id="KW-0170">Cobalt</keyword>
<keyword id="KW-0963">Cytoplasm</keyword>
<keyword id="KW-0456">Lyase</keyword>
<keyword id="KW-0479">Metal-binding</keyword>
<keyword id="KW-0520">NAD</keyword>
<keyword id="KW-0547">Nucleotide-binding</keyword>
<keyword id="KW-1185">Reference proteome</keyword>
<keyword id="KW-0862">Zinc</keyword>
<name>AROB_VIBCH</name>
<gene>
    <name evidence="1" type="primary">aroB</name>
    <name type="ordered locus">VC_2628</name>
</gene>
<dbReference type="EC" id="4.2.3.4" evidence="1"/>
<dbReference type="EMBL" id="AE003852">
    <property type="protein sequence ID" value="AAF95769.1"/>
    <property type="status" value="ALT_INIT"/>
    <property type="molecule type" value="Genomic_DNA"/>
</dbReference>
<dbReference type="PIR" id="B82053">
    <property type="entry name" value="B82053"/>
</dbReference>
<dbReference type="RefSeq" id="NP_232256.1">
    <property type="nucleotide sequence ID" value="NC_002505.1"/>
</dbReference>
<dbReference type="RefSeq" id="WP_000439805.1">
    <property type="nucleotide sequence ID" value="NZ_LT906614.1"/>
</dbReference>
<dbReference type="PDB" id="3OKF">
    <property type="method" value="X-ray"/>
    <property type="resolution" value="2.50 A"/>
    <property type="chains" value="A/B=1-361"/>
</dbReference>
<dbReference type="PDBsum" id="3OKF"/>
<dbReference type="SMR" id="Q9KNV2"/>
<dbReference type="STRING" id="243277.VC_2628"/>
<dbReference type="DNASU" id="2615645"/>
<dbReference type="EnsemblBacteria" id="AAF95769">
    <property type="protein sequence ID" value="AAF95769"/>
    <property type="gene ID" value="VC_2628"/>
</dbReference>
<dbReference type="KEGG" id="vch:VC_2628"/>
<dbReference type="PATRIC" id="fig|243277.26.peg.2506"/>
<dbReference type="eggNOG" id="COG0337">
    <property type="taxonomic scope" value="Bacteria"/>
</dbReference>
<dbReference type="HOGENOM" id="CLU_001201_0_2_6"/>
<dbReference type="UniPathway" id="UPA00053">
    <property type="reaction ID" value="UER00085"/>
</dbReference>
<dbReference type="EvolutionaryTrace" id="Q9KNV2"/>
<dbReference type="Proteomes" id="UP000000584">
    <property type="component" value="Chromosome 1"/>
</dbReference>
<dbReference type="GO" id="GO:0005737">
    <property type="term" value="C:cytoplasm"/>
    <property type="evidence" value="ECO:0007669"/>
    <property type="project" value="UniProtKB-SubCell"/>
</dbReference>
<dbReference type="GO" id="GO:0003856">
    <property type="term" value="F:3-dehydroquinate synthase activity"/>
    <property type="evidence" value="ECO:0000318"/>
    <property type="project" value="GO_Central"/>
</dbReference>
<dbReference type="GO" id="GO:0046872">
    <property type="term" value="F:metal ion binding"/>
    <property type="evidence" value="ECO:0007669"/>
    <property type="project" value="UniProtKB-KW"/>
</dbReference>
<dbReference type="GO" id="GO:0000166">
    <property type="term" value="F:nucleotide binding"/>
    <property type="evidence" value="ECO:0007669"/>
    <property type="project" value="UniProtKB-KW"/>
</dbReference>
<dbReference type="GO" id="GO:0008652">
    <property type="term" value="P:amino acid biosynthetic process"/>
    <property type="evidence" value="ECO:0007669"/>
    <property type="project" value="UniProtKB-KW"/>
</dbReference>
<dbReference type="GO" id="GO:0009073">
    <property type="term" value="P:aromatic amino acid family biosynthetic process"/>
    <property type="evidence" value="ECO:0000318"/>
    <property type="project" value="GO_Central"/>
</dbReference>
<dbReference type="GO" id="GO:0009423">
    <property type="term" value="P:chorismate biosynthetic process"/>
    <property type="evidence" value="ECO:0007669"/>
    <property type="project" value="UniProtKB-UniRule"/>
</dbReference>
<dbReference type="CDD" id="cd08195">
    <property type="entry name" value="DHQS"/>
    <property type="match status" value="1"/>
</dbReference>
<dbReference type="FunFam" id="1.20.1090.10:FF:000002">
    <property type="entry name" value="3-dehydroquinate synthase"/>
    <property type="match status" value="1"/>
</dbReference>
<dbReference type="FunFam" id="3.40.50.1970:FF:000001">
    <property type="entry name" value="3-dehydroquinate synthase"/>
    <property type="match status" value="1"/>
</dbReference>
<dbReference type="Gene3D" id="3.40.50.1970">
    <property type="match status" value="1"/>
</dbReference>
<dbReference type="Gene3D" id="1.20.1090.10">
    <property type="entry name" value="Dehydroquinate synthase-like - alpha domain"/>
    <property type="match status" value="1"/>
</dbReference>
<dbReference type="HAMAP" id="MF_00110">
    <property type="entry name" value="DHQ_synthase"/>
    <property type="match status" value="1"/>
</dbReference>
<dbReference type="InterPro" id="IPR050071">
    <property type="entry name" value="Dehydroquinate_synthase"/>
</dbReference>
<dbReference type="InterPro" id="IPR016037">
    <property type="entry name" value="DHQ_synth_AroB"/>
</dbReference>
<dbReference type="InterPro" id="IPR030963">
    <property type="entry name" value="DHQ_synth_fam"/>
</dbReference>
<dbReference type="InterPro" id="IPR030960">
    <property type="entry name" value="DHQS/DOIS_N"/>
</dbReference>
<dbReference type="InterPro" id="IPR056179">
    <property type="entry name" value="DHQS_C"/>
</dbReference>
<dbReference type="NCBIfam" id="TIGR01357">
    <property type="entry name" value="aroB"/>
    <property type="match status" value="1"/>
</dbReference>
<dbReference type="PANTHER" id="PTHR43622">
    <property type="entry name" value="3-DEHYDROQUINATE SYNTHASE"/>
    <property type="match status" value="1"/>
</dbReference>
<dbReference type="PANTHER" id="PTHR43622:SF7">
    <property type="entry name" value="3-DEHYDROQUINATE SYNTHASE, CHLOROPLASTIC"/>
    <property type="match status" value="1"/>
</dbReference>
<dbReference type="Pfam" id="PF01761">
    <property type="entry name" value="DHQ_synthase"/>
    <property type="match status" value="1"/>
</dbReference>
<dbReference type="Pfam" id="PF24621">
    <property type="entry name" value="DHQS_C"/>
    <property type="match status" value="1"/>
</dbReference>
<dbReference type="PIRSF" id="PIRSF001455">
    <property type="entry name" value="DHQ_synth"/>
    <property type="match status" value="1"/>
</dbReference>
<dbReference type="SUPFAM" id="SSF56796">
    <property type="entry name" value="Dehydroquinate synthase-like"/>
    <property type="match status" value="1"/>
</dbReference>
<comment type="function">
    <text evidence="1">Catalyzes the conversion of 3-deoxy-D-arabino-heptulosonate 7-phosphate (DAHP) to dehydroquinate (DHQ).</text>
</comment>
<comment type="catalytic activity">
    <reaction evidence="1">
        <text>7-phospho-2-dehydro-3-deoxy-D-arabino-heptonate = 3-dehydroquinate + phosphate</text>
        <dbReference type="Rhea" id="RHEA:21968"/>
        <dbReference type="ChEBI" id="CHEBI:32364"/>
        <dbReference type="ChEBI" id="CHEBI:43474"/>
        <dbReference type="ChEBI" id="CHEBI:58394"/>
        <dbReference type="EC" id="4.2.3.4"/>
    </reaction>
</comment>
<comment type="cofactor">
    <cofactor evidence="1">
        <name>NAD(+)</name>
        <dbReference type="ChEBI" id="CHEBI:57540"/>
    </cofactor>
</comment>
<comment type="cofactor">
    <cofactor evidence="1">
        <name>Co(2+)</name>
        <dbReference type="ChEBI" id="CHEBI:48828"/>
    </cofactor>
    <cofactor evidence="1">
        <name>Zn(2+)</name>
        <dbReference type="ChEBI" id="CHEBI:29105"/>
    </cofactor>
    <text evidence="1">Binds 1 divalent metal cation per subunit. Can use either Co(2+) or Zn(2+).</text>
</comment>
<comment type="pathway">
    <text evidence="1">Metabolic intermediate biosynthesis; chorismate biosynthesis; chorismate from D-erythrose 4-phosphate and phosphoenolpyruvate: step 2/7.</text>
</comment>
<comment type="subcellular location">
    <subcellularLocation>
        <location evidence="1">Cytoplasm</location>
    </subcellularLocation>
</comment>
<comment type="similarity">
    <text evidence="1 3">Belongs to the sugar phosphate cyclases superfamily. Dehydroquinate synthase family.</text>
</comment>
<comment type="sequence caution" evidence="3">
    <conflict type="erroneous initiation">
        <sequence resource="EMBL-CDS" id="AAF95769"/>
    </conflict>
</comment>
<organism>
    <name type="scientific">Vibrio cholerae serotype O1 (strain ATCC 39315 / El Tor Inaba N16961)</name>
    <dbReference type="NCBI Taxonomy" id="243277"/>
    <lineage>
        <taxon>Bacteria</taxon>
        <taxon>Pseudomonadati</taxon>
        <taxon>Pseudomonadota</taxon>
        <taxon>Gammaproteobacteria</taxon>
        <taxon>Vibrionales</taxon>
        <taxon>Vibrionaceae</taxon>
        <taxon>Vibrio</taxon>
    </lineage>
</organism>